<accession>P85420</accession>
<proteinExistence type="evidence at protein level"/>
<reference evidence="8" key="1">
    <citation type="journal article" date="2010" name="Arch. Biochem. Biophys.">
        <title>The novel metalloproteinase atroxlysin-I from Peruvian Bothrops atrox (Jergon) snake venom acts both on blood vessel ECM and platelets.</title>
        <authorList>
            <person name="Sanchez E.F."/>
            <person name="Schneider F.S."/>
            <person name="Yarleque A."/>
            <person name="Borges M.H."/>
            <person name="Richardson M."/>
            <person name="Figueiredo S.G."/>
            <person name="Evangelista K.S."/>
            <person name="Eble J.A."/>
        </authorList>
    </citation>
    <scope>PROTEIN SEQUENCE</scope>
    <scope>FUNCTION</scope>
    <scope>COFACTOR</scope>
    <scope>ACTIVITY REGULATION</scope>
    <scope>SUBUNIT</scope>
    <scope>SUBCELLULAR LOCATION</scope>
    <scope>TISSUE SPECIFICITY</scope>
    <source>
        <tissue>Venom</tissue>
    </source>
</reference>
<reference key="2">
    <citation type="submission" date="2011-06" db="UniProtKB">
        <title>Complete amino acid sequence of atroxlysin-I, a metalloproteinase from Peruvian Bothrops atrox (Jergon) venom.</title>
        <authorList>
            <person name="Sanchez E.F."/>
            <person name="Richardson M."/>
        </authorList>
    </citation>
    <scope>PROTEIN SEQUENCE</scope>
    <scope>BIOPHYSICOCHEMICAL PROPERTIES</scope>
    <source>
        <tissue>Venom</tissue>
    </source>
</reference>
<keyword id="KW-0106">Calcium</keyword>
<keyword id="KW-0903">Direct protein sequencing</keyword>
<keyword id="KW-1015">Disulfide bond</keyword>
<keyword id="KW-1205">Fibrinolytic toxin</keyword>
<keyword id="KW-1200">Hemorrhagic toxin</keyword>
<keyword id="KW-1199">Hemostasis impairing toxin</keyword>
<keyword id="KW-0378">Hydrolase</keyword>
<keyword id="KW-0479">Metal-binding</keyword>
<keyword id="KW-0482">Metalloprotease</keyword>
<keyword id="KW-1201">Platelet aggregation inhibiting toxin</keyword>
<keyword id="KW-0645">Protease</keyword>
<keyword id="KW-0964">Secreted</keyword>
<keyword id="KW-0800">Toxin</keyword>
<keyword id="KW-0862">Zinc</keyword>
<sequence length="202" mass="22918">TPEQQRYVDLFIVVDHGMFMKYNGNSDKIRRRIHQMVNIMKEAYSTMYIDILLTGVEIWSNKDLINVQPAAPQTLDSFGEWRKTDLLNRKSHDNAQLLTSTDFNGPTIGLAYVGSMCDPKRSTGVIQDHSEQDLMVAITMAHELGHNLGISHDTGSCSCGGYSCIMSPVLSHEPSKYFSDCSYIQCWDFIMKENPQCILNKR</sequence>
<evidence type="ECO:0000250" key="1"/>
<evidence type="ECO:0000250" key="2">
    <source>
        <dbReference type="UniProtKB" id="P83512"/>
    </source>
</evidence>
<evidence type="ECO:0000250" key="3">
    <source>
        <dbReference type="UniProtKB" id="Q9PW35"/>
    </source>
</evidence>
<evidence type="ECO:0000255" key="4">
    <source>
        <dbReference type="PROSITE-ProRule" id="PRU00276"/>
    </source>
</evidence>
<evidence type="ECO:0000255" key="5">
    <source>
        <dbReference type="PROSITE-ProRule" id="PRU10095"/>
    </source>
</evidence>
<evidence type="ECO:0000269" key="6">
    <source>
    </source>
</evidence>
<evidence type="ECO:0000269" key="7">
    <source ref="2"/>
</evidence>
<evidence type="ECO:0000305" key="8"/>
<evidence type="ECO:0000305" key="9">
    <source>
    </source>
</evidence>
<feature type="chain" id="PRO_0000341531" description="Snake venom metalloproteinase atroxlysin-1">
    <location>
        <begin position="1"/>
        <end position="202"/>
    </location>
</feature>
<feature type="domain" description="Peptidase M12B" evidence="4">
    <location>
        <begin position="6"/>
        <end position="202"/>
    </location>
</feature>
<feature type="active site" evidence="2 4 5">
    <location>
        <position position="143"/>
    </location>
</feature>
<feature type="binding site" evidence="1">
    <location>
        <position position="9"/>
    </location>
    <ligand>
        <name>Ca(2+)</name>
        <dbReference type="ChEBI" id="CHEBI:29108"/>
        <label>1</label>
    </ligand>
</feature>
<feature type="binding site" evidence="1">
    <location>
        <position position="93"/>
    </location>
    <ligand>
        <name>Ca(2+)</name>
        <dbReference type="ChEBI" id="CHEBI:29108"/>
        <label>1</label>
    </ligand>
</feature>
<feature type="binding site" evidence="1">
    <location>
        <position position="142"/>
    </location>
    <ligand>
        <name>Zn(2+)</name>
        <dbReference type="ChEBI" id="CHEBI:29105"/>
        <note>catalytic</note>
    </ligand>
</feature>
<feature type="binding site" evidence="1">
    <location>
        <position position="146"/>
    </location>
    <ligand>
        <name>Zn(2+)</name>
        <dbReference type="ChEBI" id="CHEBI:29105"/>
        <note>catalytic</note>
    </ligand>
</feature>
<feature type="binding site" evidence="1">
    <location>
        <position position="152"/>
    </location>
    <ligand>
        <name>Zn(2+)</name>
        <dbReference type="ChEBI" id="CHEBI:29105"/>
        <note>catalytic</note>
    </ligand>
</feature>
<feature type="binding site" evidence="1">
    <location>
        <position position="197"/>
    </location>
    <ligand>
        <name>Ca(2+)</name>
        <dbReference type="ChEBI" id="CHEBI:29108"/>
        <label>1</label>
    </ligand>
</feature>
<feature type="binding site" evidence="1">
    <location>
        <position position="200"/>
    </location>
    <ligand>
        <name>Ca(2+)</name>
        <dbReference type="ChEBI" id="CHEBI:29108"/>
        <label>1</label>
    </ligand>
</feature>
<feature type="disulfide bond" evidence="3 4">
    <location>
        <begin position="117"/>
        <end position="197"/>
    </location>
</feature>
<feature type="disulfide bond" evidence="3 4">
    <location>
        <begin position="157"/>
        <end position="181"/>
    </location>
</feature>
<feature type="disulfide bond" evidence="3 4">
    <location>
        <begin position="159"/>
        <end position="164"/>
    </location>
</feature>
<feature type="sequence conflict" description="In Ref. 1; AA sequence." evidence="8" ref="1">
    <original>S</original>
    <variation>D</variation>
    <location>
        <position position="100"/>
    </location>
</feature>
<feature type="sequence conflict" description="In Ref. 1; AA sequence." evidence="8" ref="1">
    <original>NGPTIG</original>
    <variation>DQVTIN</variation>
    <location>
        <begin position="104"/>
        <end position="109"/>
    </location>
</feature>
<feature type="sequence conflict" description="In Ref. 1; AA sequence." evidence="8" ref="1">
    <original>V</original>
    <variation>T</variation>
    <location>
        <position position="113"/>
    </location>
</feature>
<feature type="sequence conflict" description="In Ref. 1; AA sequence." evidence="8" ref="1">
    <original>PKR</original>
    <variation>LNK</variation>
    <location>
        <begin position="119"/>
        <end position="121"/>
    </location>
</feature>
<comment type="function">
    <text evidence="6">Snake venom zinc metalloproteinase that acts on fibrinogen, fibrin, fibronectin (FN1), type I collagen, type IV collagen, integrin alpha-7/beta-1 (ITGA7/ITGB1) and integrin alpha-1/beta-1 (ITGA1/ITGB1). Binds to fibronectin (FN1), fibrinogen and, weakly, to type I collagen and laminin. Cleaves Xaa-Leu bonds. Inhibits ADP- and collagen-induced platelet aggregation both in the presence (IC(50)=1.4 uM for collagen) and in the absence (IC(50)=2.2 uM for collagen) of cofactors. Has hemorrhagic activity.</text>
</comment>
<comment type="cofactor">
    <cofactor evidence="6">
        <name>Zn(2+)</name>
        <dbReference type="ChEBI" id="CHEBI:29105"/>
    </cofactor>
    <text evidence="6">Binds 1 zinc ion per subunit.</text>
</comment>
<comment type="activity regulation">
    <text evidence="6">Inhibited by EDTA, DTT and high concentrations of zinc ions (&gt;2 mM). Weakly inhibited by TLCK. Not inhibited by PMSF. Activated by calcium ions.</text>
</comment>
<comment type="biophysicochemical properties">
    <phDependence>
        <text evidence="7">Optimum pH is 7.5.</text>
    </phDependence>
    <temperatureDependence>
        <text evidence="7">Optimum temperature is 37 degrees Celsius.</text>
    </temperatureDependence>
</comment>
<comment type="subunit">
    <text evidence="6">Monomer.</text>
</comment>
<comment type="subcellular location">
    <subcellularLocation>
        <location evidence="6">Secreted</location>
    </subcellularLocation>
</comment>
<comment type="tissue specificity">
    <text evidence="6">Expressed by the venom gland.</text>
</comment>
<comment type="miscellaneous">
    <text evidence="9">Negative results: does not cleave laminin-1 (laminin-111, LAMA1/LAMB1/LAMC1), integrin alpha-2/beta-1 (ITGA2/ITGB1) or integrin alpha-3/beta-1 (ITGA3/ITGB1).</text>
</comment>
<comment type="similarity">
    <text evidence="8">Belongs to the venom metalloproteinase (M12B) family. P-I subfamily.</text>
</comment>
<dbReference type="EC" id="3.4.24.-"/>
<dbReference type="SMR" id="P85420"/>
<dbReference type="GO" id="GO:0005576">
    <property type="term" value="C:extracellular region"/>
    <property type="evidence" value="ECO:0007669"/>
    <property type="project" value="UniProtKB-SubCell"/>
</dbReference>
<dbReference type="GO" id="GO:0005886">
    <property type="term" value="C:plasma membrane"/>
    <property type="evidence" value="ECO:0007669"/>
    <property type="project" value="TreeGrafter"/>
</dbReference>
<dbReference type="GO" id="GO:0005509">
    <property type="term" value="F:calcium ion binding"/>
    <property type="evidence" value="ECO:0000314"/>
    <property type="project" value="UniProtKB"/>
</dbReference>
<dbReference type="GO" id="GO:0000287">
    <property type="term" value="F:magnesium ion binding"/>
    <property type="evidence" value="ECO:0000314"/>
    <property type="project" value="UniProtKB"/>
</dbReference>
<dbReference type="GO" id="GO:0004222">
    <property type="term" value="F:metalloendopeptidase activity"/>
    <property type="evidence" value="ECO:0007669"/>
    <property type="project" value="InterPro"/>
</dbReference>
<dbReference type="GO" id="GO:0008237">
    <property type="term" value="F:metallopeptidase activity"/>
    <property type="evidence" value="ECO:0000315"/>
    <property type="project" value="UniProtKB"/>
</dbReference>
<dbReference type="GO" id="GO:0090729">
    <property type="term" value="F:toxin activity"/>
    <property type="evidence" value="ECO:0000314"/>
    <property type="project" value="UniProtKB"/>
</dbReference>
<dbReference type="GO" id="GO:0008270">
    <property type="term" value="F:zinc ion binding"/>
    <property type="evidence" value="ECO:0000314"/>
    <property type="project" value="UniProtKB"/>
</dbReference>
<dbReference type="GO" id="GO:0031640">
    <property type="term" value="P:killing of cells of another organism"/>
    <property type="evidence" value="ECO:0000314"/>
    <property type="project" value="UniProtKB"/>
</dbReference>
<dbReference type="GO" id="GO:0006508">
    <property type="term" value="P:proteolysis"/>
    <property type="evidence" value="ECO:0007669"/>
    <property type="project" value="UniProtKB-KW"/>
</dbReference>
<dbReference type="GO" id="GO:0044523">
    <property type="term" value="P:venom-mediated disruption of extracellular matrix in another organism"/>
    <property type="evidence" value="ECO:0000314"/>
    <property type="project" value="GO_Central"/>
</dbReference>
<dbReference type="GO" id="GO:0044484">
    <property type="term" value="P:venom-mediated fibrinolysis"/>
    <property type="evidence" value="ECO:0000314"/>
    <property type="project" value="UniProtKB"/>
</dbReference>
<dbReference type="GO" id="GO:0044358">
    <property type="term" value="P:venom-mediated hemorrhage in another organism"/>
    <property type="evidence" value="ECO:0000314"/>
    <property type="project" value="UniProtKB"/>
</dbReference>
<dbReference type="CDD" id="cd04269">
    <property type="entry name" value="ZnMc_adamalysin_II_like"/>
    <property type="match status" value="1"/>
</dbReference>
<dbReference type="FunFam" id="3.40.390.10:FF:000002">
    <property type="entry name" value="Disintegrin and metalloproteinase domain-containing protein 22"/>
    <property type="match status" value="1"/>
</dbReference>
<dbReference type="Gene3D" id="3.40.390.10">
    <property type="entry name" value="Collagenase (Catalytic Domain)"/>
    <property type="match status" value="1"/>
</dbReference>
<dbReference type="InterPro" id="IPR024079">
    <property type="entry name" value="MetalloPept_cat_dom_sf"/>
</dbReference>
<dbReference type="InterPro" id="IPR001590">
    <property type="entry name" value="Peptidase_M12B"/>
</dbReference>
<dbReference type="InterPro" id="IPR034027">
    <property type="entry name" value="Reprolysin_adamalysin"/>
</dbReference>
<dbReference type="PANTHER" id="PTHR11905">
    <property type="entry name" value="ADAM A DISINTEGRIN AND METALLOPROTEASE DOMAIN"/>
    <property type="match status" value="1"/>
</dbReference>
<dbReference type="PANTHER" id="PTHR11905:SF32">
    <property type="entry name" value="DISINTEGRIN AND METALLOPROTEINASE DOMAIN-CONTAINING PROTEIN 28"/>
    <property type="match status" value="1"/>
</dbReference>
<dbReference type="Pfam" id="PF01421">
    <property type="entry name" value="Reprolysin"/>
    <property type="match status" value="1"/>
</dbReference>
<dbReference type="SUPFAM" id="SSF55486">
    <property type="entry name" value="Metalloproteases ('zincins'), catalytic domain"/>
    <property type="match status" value="1"/>
</dbReference>
<dbReference type="PROSITE" id="PS50215">
    <property type="entry name" value="ADAM_MEPRO"/>
    <property type="match status" value="1"/>
</dbReference>
<dbReference type="PROSITE" id="PS00142">
    <property type="entry name" value="ZINC_PROTEASE"/>
    <property type="match status" value="1"/>
</dbReference>
<organism>
    <name type="scientific">Bothrops atrox</name>
    <name type="common">Barba amarilla</name>
    <name type="synonym">Fer-de-lance</name>
    <dbReference type="NCBI Taxonomy" id="8725"/>
    <lineage>
        <taxon>Eukaryota</taxon>
        <taxon>Metazoa</taxon>
        <taxon>Chordata</taxon>
        <taxon>Craniata</taxon>
        <taxon>Vertebrata</taxon>
        <taxon>Euteleostomi</taxon>
        <taxon>Lepidosauria</taxon>
        <taxon>Squamata</taxon>
        <taxon>Bifurcata</taxon>
        <taxon>Unidentata</taxon>
        <taxon>Episquamata</taxon>
        <taxon>Toxicofera</taxon>
        <taxon>Serpentes</taxon>
        <taxon>Colubroidea</taxon>
        <taxon>Viperidae</taxon>
        <taxon>Crotalinae</taxon>
        <taxon>Bothrops</taxon>
    </lineage>
</organism>
<protein>
    <recommendedName>
        <fullName>Snake venom metalloproteinase atroxlysin-1</fullName>
        <shortName>SVMP</shortName>
        <ecNumber>3.4.24.-</ecNumber>
    </recommendedName>
    <alternativeName>
        <fullName>Atroxlysin-I</fullName>
    </alternativeName>
</protein>
<name>VM11_BOTAT</name>